<feature type="chain" id="PRO_1000132637" description="Large ribosomal subunit protein eL14">
    <location>
        <begin position="1"/>
        <end position="77"/>
    </location>
</feature>
<gene>
    <name evidence="1" type="primary">rpl14e</name>
    <name type="ordered locus">MmarC6_0266</name>
</gene>
<evidence type="ECO:0000255" key="1">
    <source>
        <dbReference type="HAMAP-Rule" id="MF_00721"/>
    </source>
</evidence>
<evidence type="ECO:0000305" key="2"/>
<organism>
    <name type="scientific">Methanococcus maripaludis (strain C6 / ATCC BAA-1332)</name>
    <dbReference type="NCBI Taxonomy" id="444158"/>
    <lineage>
        <taxon>Archaea</taxon>
        <taxon>Methanobacteriati</taxon>
        <taxon>Methanobacteriota</taxon>
        <taxon>Methanomada group</taxon>
        <taxon>Methanococci</taxon>
        <taxon>Methanococcales</taxon>
        <taxon>Methanococcaceae</taxon>
        <taxon>Methanococcus</taxon>
    </lineage>
</organism>
<accession>A9A699</accession>
<name>RL14E_METM6</name>
<sequence length="77" mass="8349">MAAIEVGRVCIKTLGREAGNTCVIVEVLDKNFVVIDGSVKRRRCNLKHVEPTDKKVDLEKAASTEEVKLALDAAGLL</sequence>
<keyword id="KW-0687">Ribonucleoprotein</keyword>
<keyword id="KW-0689">Ribosomal protein</keyword>
<comment type="similarity">
    <text evidence="1">Belongs to the eukaryotic ribosomal protein eL14 family.</text>
</comment>
<protein>
    <recommendedName>
        <fullName evidence="1">Large ribosomal subunit protein eL14</fullName>
    </recommendedName>
    <alternativeName>
        <fullName evidence="2">50S ribosomal protein L14e</fullName>
    </alternativeName>
</protein>
<dbReference type="EMBL" id="CP000867">
    <property type="protein sequence ID" value="ABX01087.1"/>
    <property type="molecule type" value="Genomic_DNA"/>
</dbReference>
<dbReference type="SMR" id="A9A699"/>
<dbReference type="STRING" id="444158.MmarC6_0266"/>
<dbReference type="KEGG" id="mmx:MmarC6_0266"/>
<dbReference type="eggNOG" id="arCOG04167">
    <property type="taxonomic scope" value="Archaea"/>
</dbReference>
<dbReference type="HOGENOM" id="CLU_183474_0_0_2"/>
<dbReference type="OrthoDB" id="63594at2157"/>
<dbReference type="PhylomeDB" id="A9A699"/>
<dbReference type="GO" id="GO:0022625">
    <property type="term" value="C:cytosolic large ribosomal subunit"/>
    <property type="evidence" value="ECO:0007669"/>
    <property type="project" value="TreeGrafter"/>
</dbReference>
<dbReference type="GO" id="GO:0003723">
    <property type="term" value="F:RNA binding"/>
    <property type="evidence" value="ECO:0007669"/>
    <property type="project" value="InterPro"/>
</dbReference>
<dbReference type="GO" id="GO:0003735">
    <property type="term" value="F:structural constituent of ribosome"/>
    <property type="evidence" value="ECO:0007669"/>
    <property type="project" value="InterPro"/>
</dbReference>
<dbReference type="GO" id="GO:0042273">
    <property type="term" value="P:ribosomal large subunit biogenesis"/>
    <property type="evidence" value="ECO:0007669"/>
    <property type="project" value="TreeGrafter"/>
</dbReference>
<dbReference type="GO" id="GO:0006412">
    <property type="term" value="P:translation"/>
    <property type="evidence" value="ECO:0007669"/>
    <property type="project" value="UniProtKB-UniRule"/>
</dbReference>
<dbReference type="CDD" id="cd23702">
    <property type="entry name" value="eL14"/>
    <property type="match status" value="1"/>
</dbReference>
<dbReference type="Gene3D" id="2.30.30.30">
    <property type="match status" value="1"/>
</dbReference>
<dbReference type="HAMAP" id="MF_00721">
    <property type="entry name" value="Ribosomal_eL14"/>
    <property type="match status" value="1"/>
</dbReference>
<dbReference type="InterPro" id="IPR005824">
    <property type="entry name" value="KOW"/>
</dbReference>
<dbReference type="InterPro" id="IPR014722">
    <property type="entry name" value="Rib_uL2_dom2"/>
</dbReference>
<dbReference type="InterPro" id="IPR039660">
    <property type="entry name" value="Ribosomal_eL14"/>
</dbReference>
<dbReference type="InterPro" id="IPR023651">
    <property type="entry name" value="Ribosomal_eL14_arc"/>
</dbReference>
<dbReference type="InterPro" id="IPR008991">
    <property type="entry name" value="Translation_prot_SH3-like_sf"/>
</dbReference>
<dbReference type="NCBIfam" id="NF003320">
    <property type="entry name" value="PRK04333.1"/>
    <property type="match status" value="1"/>
</dbReference>
<dbReference type="PANTHER" id="PTHR11127">
    <property type="entry name" value="60S RIBOSOMAL PROTEIN L14"/>
    <property type="match status" value="1"/>
</dbReference>
<dbReference type="PANTHER" id="PTHR11127:SF2">
    <property type="entry name" value="LARGE RIBOSOMAL SUBUNIT PROTEIN EL14"/>
    <property type="match status" value="1"/>
</dbReference>
<dbReference type="Pfam" id="PF00467">
    <property type="entry name" value="KOW"/>
    <property type="match status" value="1"/>
</dbReference>
<dbReference type="SUPFAM" id="SSF50104">
    <property type="entry name" value="Translation proteins SH3-like domain"/>
    <property type="match status" value="1"/>
</dbReference>
<proteinExistence type="inferred from homology"/>
<reference key="1">
    <citation type="submission" date="2007-10" db="EMBL/GenBank/DDBJ databases">
        <title>Complete sequence of Methanococcus maripaludis C6.</title>
        <authorList>
            <consortium name="US DOE Joint Genome Institute"/>
            <person name="Copeland A."/>
            <person name="Lucas S."/>
            <person name="Lapidus A."/>
            <person name="Barry K."/>
            <person name="Glavina del Rio T."/>
            <person name="Dalin E."/>
            <person name="Tice H."/>
            <person name="Pitluck S."/>
            <person name="Clum A."/>
            <person name="Schmutz J."/>
            <person name="Larimer F."/>
            <person name="Land M."/>
            <person name="Hauser L."/>
            <person name="Kyrpides N."/>
            <person name="Mikhailova N."/>
            <person name="Sieprawska-Lupa M."/>
            <person name="Whitman W.B."/>
            <person name="Richardson P."/>
        </authorList>
    </citation>
    <scope>NUCLEOTIDE SEQUENCE [LARGE SCALE GENOMIC DNA]</scope>
    <source>
        <strain>C6 / ATCC BAA-1332</strain>
    </source>
</reference>